<keyword id="KW-1185">Reference proteome</keyword>
<keyword id="KW-0687">Ribonucleoprotein</keyword>
<keyword id="KW-0689">Ribosomal protein</keyword>
<proteinExistence type="inferred from homology"/>
<sequence>MTTIKVKENEPFEVAMRRFKRTIEKTGLLTELRAREFYEKPTAERKRKLAAAVKRTYKRLRSQLLPPKLY</sequence>
<name>RS21_NITMU</name>
<gene>
    <name evidence="1" type="primary">rpsU</name>
    <name type="ordered locus">Nmul_A2060</name>
</gene>
<accession>Q2Y7B7</accession>
<comment type="similarity">
    <text evidence="1">Belongs to the bacterial ribosomal protein bS21 family.</text>
</comment>
<reference key="1">
    <citation type="submission" date="2005-08" db="EMBL/GenBank/DDBJ databases">
        <title>Complete sequence of chromosome 1 of Nitrosospira multiformis ATCC 25196.</title>
        <authorList>
            <person name="Copeland A."/>
            <person name="Lucas S."/>
            <person name="Lapidus A."/>
            <person name="Barry K."/>
            <person name="Detter J.C."/>
            <person name="Glavina T."/>
            <person name="Hammon N."/>
            <person name="Israni S."/>
            <person name="Pitluck S."/>
            <person name="Chain P."/>
            <person name="Malfatti S."/>
            <person name="Shin M."/>
            <person name="Vergez L."/>
            <person name="Schmutz J."/>
            <person name="Larimer F."/>
            <person name="Land M."/>
            <person name="Hauser L."/>
            <person name="Kyrpides N."/>
            <person name="Lykidis A."/>
            <person name="Richardson P."/>
        </authorList>
    </citation>
    <scope>NUCLEOTIDE SEQUENCE [LARGE SCALE GENOMIC DNA]</scope>
    <source>
        <strain>ATCC 25196 / NCIMB 11849 / C 71</strain>
    </source>
</reference>
<feature type="chain" id="PRO_0000266717" description="Small ribosomal subunit protein bS21">
    <location>
        <begin position="1"/>
        <end position="70"/>
    </location>
</feature>
<organism>
    <name type="scientific">Nitrosospira multiformis (strain ATCC 25196 / NCIMB 11849 / C 71)</name>
    <dbReference type="NCBI Taxonomy" id="323848"/>
    <lineage>
        <taxon>Bacteria</taxon>
        <taxon>Pseudomonadati</taxon>
        <taxon>Pseudomonadota</taxon>
        <taxon>Betaproteobacteria</taxon>
        <taxon>Nitrosomonadales</taxon>
        <taxon>Nitrosomonadaceae</taxon>
        <taxon>Nitrosospira</taxon>
    </lineage>
</organism>
<protein>
    <recommendedName>
        <fullName evidence="1">Small ribosomal subunit protein bS21</fullName>
    </recommendedName>
    <alternativeName>
        <fullName evidence="2">30S ribosomal protein S21</fullName>
    </alternativeName>
</protein>
<evidence type="ECO:0000255" key="1">
    <source>
        <dbReference type="HAMAP-Rule" id="MF_00358"/>
    </source>
</evidence>
<evidence type="ECO:0000305" key="2"/>
<dbReference type="EMBL" id="CP000103">
    <property type="protein sequence ID" value="ABB75354.1"/>
    <property type="molecule type" value="Genomic_DNA"/>
</dbReference>
<dbReference type="RefSeq" id="WP_004179462.1">
    <property type="nucleotide sequence ID" value="NZ_FNVK01000026.1"/>
</dbReference>
<dbReference type="SMR" id="Q2Y7B7"/>
<dbReference type="STRING" id="323848.Nmul_A2060"/>
<dbReference type="KEGG" id="nmu:Nmul_A2060"/>
<dbReference type="eggNOG" id="COG0828">
    <property type="taxonomic scope" value="Bacteria"/>
</dbReference>
<dbReference type="HOGENOM" id="CLU_159258_1_2_4"/>
<dbReference type="OrthoDB" id="9799244at2"/>
<dbReference type="Proteomes" id="UP000002718">
    <property type="component" value="Chromosome"/>
</dbReference>
<dbReference type="GO" id="GO:1990904">
    <property type="term" value="C:ribonucleoprotein complex"/>
    <property type="evidence" value="ECO:0007669"/>
    <property type="project" value="UniProtKB-KW"/>
</dbReference>
<dbReference type="GO" id="GO:0005840">
    <property type="term" value="C:ribosome"/>
    <property type="evidence" value="ECO:0007669"/>
    <property type="project" value="UniProtKB-KW"/>
</dbReference>
<dbReference type="GO" id="GO:0003735">
    <property type="term" value="F:structural constituent of ribosome"/>
    <property type="evidence" value="ECO:0007669"/>
    <property type="project" value="InterPro"/>
</dbReference>
<dbReference type="GO" id="GO:0006412">
    <property type="term" value="P:translation"/>
    <property type="evidence" value="ECO:0007669"/>
    <property type="project" value="UniProtKB-UniRule"/>
</dbReference>
<dbReference type="Gene3D" id="1.20.5.1150">
    <property type="entry name" value="Ribosomal protein S8"/>
    <property type="match status" value="1"/>
</dbReference>
<dbReference type="HAMAP" id="MF_00358">
    <property type="entry name" value="Ribosomal_bS21"/>
    <property type="match status" value="1"/>
</dbReference>
<dbReference type="InterPro" id="IPR001911">
    <property type="entry name" value="Ribosomal_bS21"/>
</dbReference>
<dbReference type="InterPro" id="IPR038380">
    <property type="entry name" value="Ribosomal_bS21_sf"/>
</dbReference>
<dbReference type="NCBIfam" id="TIGR00030">
    <property type="entry name" value="S21p"/>
    <property type="match status" value="1"/>
</dbReference>
<dbReference type="PANTHER" id="PTHR21109">
    <property type="entry name" value="MITOCHONDRIAL 28S RIBOSOMAL PROTEIN S21"/>
    <property type="match status" value="1"/>
</dbReference>
<dbReference type="PANTHER" id="PTHR21109:SF22">
    <property type="entry name" value="SMALL RIBOSOMAL SUBUNIT PROTEIN BS21"/>
    <property type="match status" value="1"/>
</dbReference>
<dbReference type="Pfam" id="PF01165">
    <property type="entry name" value="Ribosomal_S21"/>
    <property type="match status" value="1"/>
</dbReference>
<dbReference type="PRINTS" id="PR00976">
    <property type="entry name" value="RIBOSOMALS21"/>
</dbReference>